<accession>S4W775</accession>
<evidence type="ECO:0000256" key="1">
    <source>
        <dbReference type="SAM" id="MobiDB-lite"/>
    </source>
</evidence>
<evidence type="ECO:0000303" key="2">
    <source>
    </source>
</evidence>
<evidence type="ECO:0000305" key="3"/>
<evidence type="ECO:0000305" key="4">
    <source>
    </source>
</evidence>
<keyword id="KW-0539">Nucleus</keyword>
<protein>
    <recommendedName>
        <fullName evidence="2">Equisetin cluster transcription factor eqxF</fullName>
    </recommendedName>
    <alternativeName>
        <fullName evidence="2">Equisetin biosynthesis protein F</fullName>
    </alternativeName>
</protein>
<dbReference type="EMBL" id="KC439347">
    <property type="protein sequence ID" value="AGO86660.1"/>
    <property type="molecule type" value="Genomic_DNA"/>
</dbReference>
<dbReference type="GO" id="GO:0005634">
    <property type="term" value="C:nucleus"/>
    <property type="evidence" value="ECO:0007669"/>
    <property type="project" value="UniProtKB-SubCell"/>
</dbReference>
<dbReference type="GO" id="GO:0003677">
    <property type="term" value="F:DNA binding"/>
    <property type="evidence" value="ECO:0007669"/>
    <property type="project" value="InterPro"/>
</dbReference>
<dbReference type="GO" id="GO:0008270">
    <property type="term" value="F:zinc ion binding"/>
    <property type="evidence" value="ECO:0007669"/>
    <property type="project" value="InterPro"/>
</dbReference>
<dbReference type="GO" id="GO:0006351">
    <property type="term" value="P:DNA-templated transcription"/>
    <property type="evidence" value="ECO:0007669"/>
    <property type="project" value="InterPro"/>
</dbReference>
<dbReference type="CDD" id="cd12148">
    <property type="entry name" value="fungal_TF_MHR"/>
    <property type="match status" value="1"/>
</dbReference>
<dbReference type="InterPro" id="IPR050613">
    <property type="entry name" value="Sec_Metabolite_Reg"/>
</dbReference>
<dbReference type="InterPro" id="IPR007219">
    <property type="entry name" value="Transcription_factor_dom_fun"/>
</dbReference>
<dbReference type="PANTHER" id="PTHR31001">
    <property type="entry name" value="UNCHARACTERIZED TRANSCRIPTIONAL REGULATORY PROTEIN"/>
    <property type="match status" value="1"/>
</dbReference>
<dbReference type="PANTHER" id="PTHR31001:SF74">
    <property type="entry name" value="ZN(II)2CYS6 TRANSCRIPTION FACTOR (EUROFUNG)"/>
    <property type="match status" value="1"/>
</dbReference>
<dbReference type="Pfam" id="PF04082">
    <property type="entry name" value="Fungal_trans"/>
    <property type="match status" value="1"/>
</dbReference>
<dbReference type="SMART" id="SM00906">
    <property type="entry name" value="Fungal_trans"/>
    <property type="match status" value="1"/>
</dbReference>
<proteinExistence type="predicted"/>
<reference key="1">
    <citation type="journal article" date="2013" name="ACS Chem. Biol.">
        <title>Two related pyrrolidinedione synthetase loci in Fusarium heterosporum ATCC 74349 produce divergent metabolites.</title>
        <authorList>
            <person name="Kakule T.B."/>
            <person name="Sardar D."/>
            <person name="Lin Z."/>
            <person name="Schmidt E.W."/>
        </authorList>
    </citation>
    <scope>NUCLEOTIDE SEQUENCE [GENOMIC DNA]</scope>
    <scope>FUNCTION</scope>
    <source>
        <strain>ATCC 74349 / MF6069</strain>
    </source>
</reference>
<comment type="function">
    <text evidence="4">Transcription factor that regulates the expression of the gene cluster that mediates the biosynthesis of Equisetin (PubMed:23614392).</text>
</comment>
<comment type="subcellular location">
    <subcellularLocation>
        <location evidence="3">Nucleus</location>
    </subcellularLocation>
</comment>
<sequence length="696" mass="78415">MADQVQDVHPMEWGPGKTPQGRARLPSSFDATVKDPVAAVHSENLVCRVPMHRIRHLESLVYDLMQNSSANVNQEQVGVTPSPGDQPHVPDYPTPSAAHAPSTNQEPASAAVSPADYGSMQSTGGGANYVGSAHWAAVLDGIAELKDHLDNEESHHSDSQGVDPPCLQVTGPQLLYGCPKPADKDEILSSIPARSVVDRLVSRYFNSFEMSPAVLHSVQFLKEYEEFWEDPQTTSPIWLGLLFTIMCLATQFEKSRLDPGVQSPAVLSMERELQEMVDTFRLRIPQCLVLGSYAKGGPFVLETLMLYIAAEIFLSNDAEIEIWILMGNTVQLALHMGYHRDPKHFKGLSPFTAEMRRRIWATIVEMDLGLSAQMGLPRMIKHWQTDTQEPSNFQDSDFDSATVEMPPSRLNTDLTPILYRLVKARLMTTIGYIWDFSADVRPYPYTEVQKMDDKLDQARKSIPECLKWHSMARNITDSPQHIMQKVILETVFYRAKIVLHRKYMFLPLAQSASSRRIVLESALKLLDYQHMLQEETQPFCQLYQERWRVSSLVNHDFLLATSILCYYLQHARGATPQLSESASFDETIMTSLSRSHDIWLQSSNSSKEARKVVRALAVILGRVNTPSADAAGESGLVFGLQSTYPPSTTNDYSQAPMITPTAEWQEMDGQSQWLPGPRVIQRLTYDMQRQQMRWGL</sequence>
<gene>
    <name evidence="2" type="primary">eqxF</name>
</gene>
<organism>
    <name type="scientific">Fusarium heterosporum</name>
    <dbReference type="NCBI Taxonomy" id="42747"/>
    <lineage>
        <taxon>Eukaryota</taxon>
        <taxon>Fungi</taxon>
        <taxon>Dikarya</taxon>
        <taxon>Ascomycota</taxon>
        <taxon>Pezizomycotina</taxon>
        <taxon>Sordariomycetes</taxon>
        <taxon>Hypocreomycetidae</taxon>
        <taxon>Hypocreales</taxon>
        <taxon>Nectriaceae</taxon>
        <taxon>Fusarium</taxon>
        <taxon>Fusarium heterosporum species complex</taxon>
    </lineage>
</organism>
<name>EQXF_FUSHE</name>
<feature type="chain" id="PRO_0000441305" description="Equisetin cluster transcription factor eqxF">
    <location>
        <begin position="1"/>
        <end position="696"/>
    </location>
</feature>
<feature type="region of interest" description="Disordered" evidence="1">
    <location>
        <begin position="1"/>
        <end position="24"/>
    </location>
</feature>
<feature type="region of interest" description="Disordered" evidence="1">
    <location>
        <begin position="73"/>
        <end position="117"/>
    </location>
</feature>